<feature type="chain" id="PRO_0000269348" description="Large ribosomal subunit protein bL21">
    <location>
        <begin position="1"/>
        <end position="102"/>
    </location>
</feature>
<evidence type="ECO:0000255" key="1">
    <source>
        <dbReference type="HAMAP-Rule" id="MF_01363"/>
    </source>
</evidence>
<evidence type="ECO:0000305" key="2"/>
<protein>
    <recommendedName>
        <fullName evidence="1">Large ribosomal subunit protein bL21</fullName>
    </recommendedName>
    <alternativeName>
        <fullName evidence="2">50S ribosomal protein L21</fullName>
    </alternativeName>
</protein>
<keyword id="KW-0687">Ribonucleoprotein</keyword>
<keyword id="KW-0689">Ribosomal protein</keyword>
<keyword id="KW-0694">RNA-binding</keyword>
<keyword id="KW-0699">rRNA-binding</keyword>
<dbReference type="EMBL" id="AL157959">
    <property type="protein sequence ID" value="CAM09258.1"/>
    <property type="molecule type" value="Genomic_DNA"/>
</dbReference>
<dbReference type="PIR" id="H81212">
    <property type="entry name" value="H81212"/>
</dbReference>
<dbReference type="RefSeq" id="WP_002216394.1">
    <property type="nucleotide sequence ID" value="NC_003116.1"/>
</dbReference>
<dbReference type="SMR" id="Q9JRF6"/>
<dbReference type="EnsemblBacteria" id="CAM09258">
    <property type="protein sequence ID" value="CAM09258"/>
    <property type="gene ID" value="NMA2162"/>
</dbReference>
<dbReference type="GeneID" id="93387416"/>
<dbReference type="KEGG" id="nma:NMA2162"/>
<dbReference type="HOGENOM" id="CLU_061463_3_2_4"/>
<dbReference type="Proteomes" id="UP000000626">
    <property type="component" value="Chromosome"/>
</dbReference>
<dbReference type="GO" id="GO:0005737">
    <property type="term" value="C:cytoplasm"/>
    <property type="evidence" value="ECO:0007669"/>
    <property type="project" value="UniProtKB-ARBA"/>
</dbReference>
<dbReference type="GO" id="GO:1990904">
    <property type="term" value="C:ribonucleoprotein complex"/>
    <property type="evidence" value="ECO:0007669"/>
    <property type="project" value="UniProtKB-KW"/>
</dbReference>
<dbReference type="GO" id="GO:0005840">
    <property type="term" value="C:ribosome"/>
    <property type="evidence" value="ECO:0007669"/>
    <property type="project" value="UniProtKB-KW"/>
</dbReference>
<dbReference type="GO" id="GO:0019843">
    <property type="term" value="F:rRNA binding"/>
    <property type="evidence" value="ECO:0007669"/>
    <property type="project" value="UniProtKB-UniRule"/>
</dbReference>
<dbReference type="GO" id="GO:0003735">
    <property type="term" value="F:structural constituent of ribosome"/>
    <property type="evidence" value="ECO:0007669"/>
    <property type="project" value="InterPro"/>
</dbReference>
<dbReference type="GO" id="GO:0006412">
    <property type="term" value="P:translation"/>
    <property type="evidence" value="ECO:0007669"/>
    <property type="project" value="UniProtKB-UniRule"/>
</dbReference>
<dbReference type="HAMAP" id="MF_01363">
    <property type="entry name" value="Ribosomal_bL21"/>
    <property type="match status" value="1"/>
</dbReference>
<dbReference type="InterPro" id="IPR028909">
    <property type="entry name" value="bL21-like"/>
</dbReference>
<dbReference type="InterPro" id="IPR036164">
    <property type="entry name" value="bL21-like_sf"/>
</dbReference>
<dbReference type="InterPro" id="IPR001787">
    <property type="entry name" value="Ribosomal_bL21"/>
</dbReference>
<dbReference type="InterPro" id="IPR018258">
    <property type="entry name" value="Ribosomal_bL21_CS"/>
</dbReference>
<dbReference type="NCBIfam" id="TIGR00061">
    <property type="entry name" value="L21"/>
    <property type="match status" value="1"/>
</dbReference>
<dbReference type="PANTHER" id="PTHR21349">
    <property type="entry name" value="50S RIBOSOMAL PROTEIN L21"/>
    <property type="match status" value="1"/>
</dbReference>
<dbReference type="PANTHER" id="PTHR21349:SF0">
    <property type="entry name" value="LARGE RIBOSOMAL SUBUNIT PROTEIN BL21M"/>
    <property type="match status" value="1"/>
</dbReference>
<dbReference type="Pfam" id="PF00829">
    <property type="entry name" value="Ribosomal_L21p"/>
    <property type="match status" value="1"/>
</dbReference>
<dbReference type="SUPFAM" id="SSF141091">
    <property type="entry name" value="L21p-like"/>
    <property type="match status" value="1"/>
</dbReference>
<dbReference type="PROSITE" id="PS01169">
    <property type="entry name" value="RIBOSOMAL_L21"/>
    <property type="match status" value="1"/>
</dbReference>
<gene>
    <name evidence="1" type="primary">rplU</name>
    <name type="ordered locus">NMA2162</name>
</gene>
<proteinExistence type="inferred from homology"/>
<sequence length="102" mass="11448">MYAVVKTGGKQYKVSVGEKLKVEQIPAELDSQIELTEVLMIADGESVKVGAPFIEGAKVTAKVVAHGRGEKVRIFKMRRRKHYQKRQGHRQNFTQIEIVAIA</sequence>
<comment type="function">
    <text evidence="1">This protein binds to 23S rRNA in the presence of protein L20.</text>
</comment>
<comment type="subunit">
    <text evidence="1">Part of the 50S ribosomal subunit. Contacts protein L20.</text>
</comment>
<comment type="similarity">
    <text evidence="1">Belongs to the bacterial ribosomal protein bL21 family.</text>
</comment>
<accession>Q9JRF6</accession>
<accession>A1ITY9</accession>
<name>RL21_NEIMA</name>
<organism>
    <name type="scientific">Neisseria meningitidis serogroup A / serotype 4A (strain DSM 15465 / Z2491)</name>
    <dbReference type="NCBI Taxonomy" id="122587"/>
    <lineage>
        <taxon>Bacteria</taxon>
        <taxon>Pseudomonadati</taxon>
        <taxon>Pseudomonadota</taxon>
        <taxon>Betaproteobacteria</taxon>
        <taxon>Neisseriales</taxon>
        <taxon>Neisseriaceae</taxon>
        <taxon>Neisseria</taxon>
    </lineage>
</organism>
<reference key="1">
    <citation type="journal article" date="2000" name="Nature">
        <title>Complete DNA sequence of a serogroup A strain of Neisseria meningitidis Z2491.</title>
        <authorList>
            <person name="Parkhill J."/>
            <person name="Achtman M."/>
            <person name="James K.D."/>
            <person name="Bentley S.D."/>
            <person name="Churcher C.M."/>
            <person name="Klee S.R."/>
            <person name="Morelli G."/>
            <person name="Basham D."/>
            <person name="Brown D."/>
            <person name="Chillingworth T."/>
            <person name="Davies R.M."/>
            <person name="Davis P."/>
            <person name="Devlin K."/>
            <person name="Feltwell T."/>
            <person name="Hamlin N."/>
            <person name="Holroyd S."/>
            <person name="Jagels K."/>
            <person name="Leather S."/>
            <person name="Moule S."/>
            <person name="Mungall K.L."/>
            <person name="Quail M.A."/>
            <person name="Rajandream M.A."/>
            <person name="Rutherford K.M."/>
            <person name="Simmonds M."/>
            <person name="Skelton J."/>
            <person name="Whitehead S."/>
            <person name="Spratt B.G."/>
            <person name="Barrell B.G."/>
        </authorList>
    </citation>
    <scope>NUCLEOTIDE SEQUENCE [LARGE SCALE GENOMIC DNA]</scope>
    <source>
        <strain>DSM 15465 / Z2491</strain>
    </source>
</reference>